<protein>
    <recommendedName>
        <fullName evidence="1">Isopentenyl-diphosphate delta-isomerase</fullName>
        <shortName evidence="1">IPP isomerase</shortName>
        <ecNumber evidence="1">5.3.3.2</ecNumber>
    </recommendedName>
    <alternativeName>
        <fullName evidence="1">Isopentenyl diphosphate:dimethylallyl diphosphate isomerase</fullName>
    </alternativeName>
    <alternativeName>
        <fullName evidence="1">Isopentenyl pyrophosphate isomerase</fullName>
    </alternativeName>
    <alternativeName>
        <fullName evidence="1">Type 2 isopentenyl diphosphate isomerase</fullName>
        <shortName evidence="1">IDI-2</shortName>
    </alternativeName>
</protein>
<dbReference type="EC" id="5.3.3.2" evidence="1"/>
<dbReference type="EMBL" id="CP000485">
    <property type="protein sequence ID" value="ABK84697.1"/>
    <property type="molecule type" value="Genomic_DNA"/>
</dbReference>
<dbReference type="RefSeq" id="WP_000251055.1">
    <property type="nucleotide sequence ID" value="NC_008600.1"/>
</dbReference>
<dbReference type="SMR" id="A0RBV4"/>
<dbReference type="KEGG" id="btl:BALH_1354"/>
<dbReference type="HOGENOM" id="CLU_065515_0_0_9"/>
<dbReference type="GO" id="GO:0005737">
    <property type="term" value="C:cytoplasm"/>
    <property type="evidence" value="ECO:0007669"/>
    <property type="project" value="UniProtKB-SubCell"/>
</dbReference>
<dbReference type="GO" id="GO:0010181">
    <property type="term" value="F:FMN binding"/>
    <property type="evidence" value="ECO:0007669"/>
    <property type="project" value="UniProtKB-UniRule"/>
</dbReference>
<dbReference type="GO" id="GO:0004452">
    <property type="term" value="F:isopentenyl-diphosphate delta-isomerase activity"/>
    <property type="evidence" value="ECO:0007669"/>
    <property type="project" value="UniProtKB-UniRule"/>
</dbReference>
<dbReference type="GO" id="GO:0000287">
    <property type="term" value="F:magnesium ion binding"/>
    <property type="evidence" value="ECO:0007669"/>
    <property type="project" value="UniProtKB-UniRule"/>
</dbReference>
<dbReference type="GO" id="GO:0070402">
    <property type="term" value="F:NADPH binding"/>
    <property type="evidence" value="ECO:0007669"/>
    <property type="project" value="UniProtKB-UniRule"/>
</dbReference>
<dbReference type="GO" id="GO:0016491">
    <property type="term" value="F:oxidoreductase activity"/>
    <property type="evidence" value="ECO:0007669"/>
    <property type="project" value="InterPro"/>
</dbReference>
<dbReference type="GO" id="GO:0008299">
    <property type="term" value="P:isoprenoid biosynthetic process"/>
    <property type="evidence" value="ECO:0007669"/>
    <property type="project" value="UniProtKB-UniRule"/>
</dbReference>
<dbReference type="CDD" id="cd02811">
    <property type="entry name" value="IDI-2_FMN"/>
    <property type="match status" value="1"/>
</dbReference>
<dbReference type="FunFam" id="3.20.20.70:FF:000115">
    <property type="entry name" value="Isopentenyl-diphosphate delta-isomerase"/>
    <property type="match status" value="1"/>
</dbReference>
<dbReference type="Gene3D" id="3.20.20.70">
    <property type="entry name" value="Aldolase class I"/>
    <property type="match status" value="1"/>
</dbReference>
<dbReference type="HAMAP" id="MF_00354">
    <property type="entry name" value="Idi_2"/>
    <property type="match status" value="1"/>
</dbReference>
<dbReference type="InterPro" id="IPR013785">
    <property type="entry name" value="Aldolase_TIM"/>
</dbReference>
<dbReference type="InterPro" id="IPR000262">
    <property type="entry name" value="FMN-dep_DH"/>
</dbReference>
<dbReference type="InterPro" id="IPR011179">
    <property type="entry name" value="IPdP_isomerase"/>
</dbReference>
<dbReference type="NCBIfam" id="TIGR02151">
    <property type="entry name" value="IPP_isom_2"/>
    <property type="match status" value="1"/>
</dbReference>
<dbReference type="PANTHER" id="PTHR43665">
    <property type="entry name" value="ISOPENTENYL-DIPHOSPHATE DELTA-ISOMERASE"/>
    <property type="match status" value="1"/>
</dbReference>
<dbReference type="PANTHER" id="PTHR43665:SF1">
    <property type="entry name" value="ISOPENTENYL-DIPHOSPHATE DELTA-ISOMERASE"/>
    <property type="match status" value="1"/>
</dbReference>
<dbReference type="Pfam" id="PF01070">
    <property type="entry name" value="FMN_dh"/>
    <property type="match status" value="1"/>
</dbReference>
<dbReference type="PIRSF" id="PIRSF003314">
    <property type="entry name" value="IPP_isomerase"/>
    <property type="match status" value="1"/>
</dbReference>
<dbReference type="SMART" id="SM01240">
    <property type="entry name" value="IMPDH"/>
    <property type="match status" value="1"/>
</dbReference>
<dbReference type="SUPFAM" id="SSF51395">
    <property type="entry name" value="FMN-linked oxidoreductases"/>
    <property type="match status" value="1"/>
</dbReference>
<evidence type="ECO:0000255" key="1">
    <source>
        <dbReference type="HAMAP-Rule" id="MF_00354"/>
    </source>
</evidence>
<feature type="chain" id="PRO_1000048434" description="Isopentenyl-diphosphate delta-isomerase">
    <location>
        <begin position="1"/>
        <end position="349"/>
    </location>
</feature>
<feature type="binding site" evidence="1">
    <location>
        <begin position="6"/>
        <end position="7"/>
    </location>
    <ligand>
        <name>substrate</name>
    </ligand>
</feature>
<feature type="binding site" evidence="1">
    <location>
        <begin position="62"/>
        <end position="64"/>
    </location>
    <ligand>
        <name>FMN</name>
        <dbReference type="ChEBI" id="CHEBI:58210"/>
    </ligand>
</feature>
<feature type="binding site" evidence="1">
    <location>
        <position position="93"/>
    </location>
    <ligand>
        <name>FMN</name>
        <dbReference type="ChEBI" id="CHEBI:58210"/>
    </ligand>
</feature>
<feature type="binding site" evidence="1">
    <location>
        <position position="122"/>
    </location>
    <ligand>
        <name>FMN</name>
        <dbReference type="ChEBI" id="CHEBI:58210"/>
    </ligand>
</feature>
<feature type="binding site" evidence="1">
    <location>
        <position position="152"/>
    </location>
    <ligand>
        <name>substrate</name>
    </ligand>
</feature>
<feature type="binding site" evidence="1">
    <location>
        <position position="153"/>
    </location>
    <ligand>
        <name>Mg(2+)</name>
        <dbReference type="ChEBI" id="CHEBI:18420"/>
    </ligand>
</feature>
<feature type="binding site" evidence="1">
    <location>
        <position position="184"/>
    </location>
    <ligand>
        <name>FMN</name>
        <dbReference type="ChEBI" id="CHEBI:58210"/>
    </ligand>
</feature>
<feature type="binding site" evidence="1">
    <location>
        <position position="214"/>
    </location>
    <ligand>
        <name>FMN</name>
        <dbReference type="ChEBI" id="CHEBI:58210"/>
    </ligand>
</feature>
<feature type="binding site" evidence="1">
    <location>
        <begin position="258"/>
        <end position="259"/>
    </location>
    <ligand>
        <name>FMN</name>
        <dbReference type="ChEBI" id="CHEBI:58210"/>
    </ligand>
</feature>
<feature type="binding site" evidence="1">
    <location>
        <begin position="280"/>
        <end position="281"/>
    </location>
    <ligand>
        <name>FMN</name>
        <dbReference type="ChEBI" id="CHEBI:58210"/>
    </ligand>
</feature>
<gene>
    <name evidence="1" type="primary">fni</name>
    <name type="ordered locus">BALH_1354</name>
</gene>
<sequence>MVRAKRKLDHIEYALSTGQSRTHGFHDIDFVHQSLPNSSYETITCETKIGELSLSSPIFINAMTGGGGEKTLHINEQLAYVAKHHNLAMAVGSQMAALKDESEAASYKIIRKVNPNGIFFANLGSEATVEQAELAVDMIEANALQIHLNVIQELTMPEGDRDFTGVLQRIEKIVLNSKVPVIVKEVGFGMSKETMQQLASVGVTAIDIGGQGGTNFAAVENERRQRMLSYFNNWGIQTATSIIEATSTNNNLSFIASGGIQTALDVAKAIALGANTTAFAGYFLRILMEDGIEKLVDEIDLLHTDLKFIMTALGAKTIEELQSVPLVVKGETYHWLTQRGIDTTHYSRR</sequence>
<reference key="1">
    <citation type="journal article" date="2007" name="J. Bacteriol.">
        <title>The complete genome sequence of Bacillus thuringiensis Al Hakam.</title>
        <authorList>
            <person name="Challacombe J.F."/>
            <person name="Altherr M.R."/>
            <person name="Xie G."/>
            <person name="Bhotika S.S."/>
            <person name="Brown N."/>
            <person name="Bruce D."/>
            <person name="Campbell C.S."/>
            <person name="Campbell M.L."/>
            <person name="Chen J."/>
            <person name="Chertkov O."/>
            <person name="Cleland C."/>
            <person name="Dimitrijevic M."/>
            <person name="Doggett N.A."/>
            <person name="Fawcett J.J."/>
            <person name="Glavina T."/>
            <person name="Goodwin L.A."/>
            <person name="Green L.D."/>
            <person name="Han C.S."/>
            <person name="Hill K.K."/>
            <person name="Hitchcock P."/>
            <person name="Jackson P.J."/>
            <person name="Keim P."/>
            <person name="Kewalramani A.R."/>
            <person name="Longmire J."/>
            <person name="Lucas S."/>
            <person name="Malfatti S."/>
            <person name="Martinez D."/>
            <person name="McMurry K."/>
            <person name="Meincke L.J."/>
            <person name="Misra M."/>
            <person name="Moseman B.L."/>
            <person name="Mundt M."/>
            <person name="Munk A.C."/>
            <person name="Okinaka R.T."/>
            <person name="Parson-Quintana B."/>
            <person name="Reilly L.P."/>
            <person name="Richardson P."/>
            <person name="Robinson D.L."/>
            <person name="Saunders E."/>
            <person name="Tapia R."/>
            <person name="Tesmer J.G."/>
            <person name="Thayer N."/>
            <person name="Thompson L.S."/>
            <person name="Tice H."/>
            <person name="Ticknor L.O."/>
            <person name="Wills P.L."/>
            <person name="Gilna P."/>
            <person name="Brettin T.S."/>
        </authorList>
    </citation>
    <scope>NUCLEOTIDE SEQUENCE [LARGE SCALE GENOMIC DNA]</scope>
    <source>
        <strain>Al Hakam</strain>
    </source>
</reference>
<keyword id="KW-0963">Cytoplasm</keyword>
<keyword id="KW-0285">Flavoprotein</keyword>
<keyword id="KW-0288">FMN</keyword>
<keyword id="KW-0413">Isomerase</keyword>
<keyword id="KW-0414">Isoprene biosynthesis</keyword>
<keyword id="KW-0460">Magnesium</keyword>
<keyword id="KW-0479">Metal-binding</keyword>
<keyword id="KW-0521">NADP</keyword>
<organism>
    <name type="scientific">Bacillus thuringiensis (strain Al Hakam)</name>
    <dbReference type="NCBI Taxonomy" id="412694"/>
    <lineage>
        <taxon>Bacteria</taxon>
        <taxon>Bacillati</taxon>
        <taxon>Bacillota</taxon>
        <taxon>Bacilli</taxon>
        <taxon>Bacillales</taxon>
        <taxon>Bacillaceae</taxon>
        <taxon>Bacillus</taxon>
        <taxon>Bacillus cereus group</taxon>
    </lineage>
</organism>
<name>IDI2_BACAH</name>
<comment type="function">
    <text evidence="1">Involved in the biosynthesis of isoprenoids. Catalyzes the 1,3-allylic rearrangement of the homoallylic substrate isopentenyl (IPP) to its allylic isomer, dimethylallyl diphosphate (DMAPP).</text>
</comment>
<comment type="catalytic activity">
    <reaction evidence="1">
        <text>isopentenyl diphosphate = dimethylallyl diphosphate</text>
        <dbReference type="Rhea" id="RHEA:23284"/>
        <dbReference type="ChEBI" id="CHEBI:57623"/>
        <dbReference type="ChEBI" id="CHEBI:128769"/>
        <dbReference type="EC" id="5.3.3.2"/>
    </reaction>
</comment>
<comment type="cofactor">
    <cofactor evidence="1">
        <name>FMN</name>
        <dbReference type="ChEBI" id="CHEBI:58210"/>
    </cofactor>
</comment>
<comment type="cofactor">
    <cofactor evidence="1">
        <name>NADPH</name>
        <dbReference type="ChEBI" id="CHEBI:57783"/>
    </cofactor>
</comment>
<comment type="cofactor">
    <cofactor evidence="1">
        <name>Mg(2+)</name>
        <dbReference type="ChEBI" id="CHEBI:18420"/>
    </cofactor>
</comment>
<comment type="subunit">
    <text evidence="1">Homooctamer. Dimer of tetramers.</text>
</comment>
<comment type="subcellular location">
    <subcellularLocation>
        <location evidence="1">Cytoplasm</location>
    </subcellularLocation>
</comment>
<comment type="similarity">
    <text evidence="1">Belongs to the IPP isomerase type 2 family.</text>
</comment>
<accession>A0RBV4</accession>
<proteinExistence type="inferred from homology"/>